<protein>
    <recommendedName>
        <fullName evidence="1">Dual-specificity RNA methyltransferase RlmN</fullName>
        <ecNumber evidence="1">2.1.1.192</ecNumber>
    </recommendedName>
    <alternativeName>
        <fullName evidence="1">23S rRNA (adenine(2503)-C(2))-methyltransferase</fullName>
    </alternativeName>
    <alternativeName>
        <fullName evidence="1">23S rRNA m2A2503 methyltransferase</fullName>
    </alternativeName>
    <alternativeName>
        <fullName evidence="1">Ribosomal RNA large subunit methyltransferase N</fullName>
    </alternativeName>
    <alternativeName>
        <fullName evidence="1">tRNA (adenine(37)-C(2))-methyltransferase</fullName>
    </alternativeName>
    <alternativeName>
        <fullName evidence="1">tRNA m2A37 methyltransferase</fullName>
    </alternativeName>
</protein>
<organism>
    <name type="scientific">Polaromonas naphthalenivorans (strain CJ2)</name>
    <dbReference type="NCBI Taxonomy" id="365044"/>
    <lineage>
        <taxon>Bacteria</taxon>
        <taxon>Pseudomonadati</taxon>
        <taxon>Pseudomonadota</taxon>
        <taxon>Betaproteobacteria</taxon>
        <taxon>Burkholderiales</taxon>
        <taxon>Comamonadaceae</taxon>
        <taxon>Polaromonas</taxon>
    </lineage>
</organism>
<comment type="function">
    <text evidence="1">Specifically methylates position 2 of adenine 2503 in 23S rRNA and position 2 of adenine 37 in tRNAs. m2A2503 modification seems to play a crucial role in the proofreading step occurring at the peptidyl transferase center and thus would serve to optimize ribosomal fidelity.</text>
</comment>
<comment type="catalytic activity">
    <reaction evidence="1">
        <text>adenosine(2503) in 23S rRNA + 2 reduced [2Fe-2S]-[ferredoxin] + 2 S-adenosyl-L-methionine = 2-methyladenosine(2503) in 23S rRNA + 5'-deoxyadenosine + L-methionine + 2 oxidized [2Fe-2S]-[ferredoxin] + S-adenosyl-L-homocysteine</text>
        <dbReference type="Rhea" id="RHEA:42916"/>
        <dbReference type="Rhea" id="RHEA-COMP:10000"/>
        <dbReference type="Rhea" id="RHEA-COMP:10001"/>
        <dbReference type="Rhea" id="RHEA-COMP:10152"/>
        <dbReference type="Rhea" id="RHEA-COMP:10282"/>
        <dbReference type="ChEBI" id="CHEBI:17319"/>
        <dbReference type="ChEBI" id="CHEBI:33737"/>
        <dbReference type="ChEBI" id="CHEBI:33738"/>
        <dbReference type="ChEBI" id="CHEBI:57844"/>
        <dbReference type="ChEBI" id="CHEBI:57856"/>
        <dbReference type="ChEBI" id="CHEBI:59789"/>
        <dbReference type="ChEBI" id="CHEBI:74411"/>
        <dbReference type="ChEBI" id="CHEBI:74497"/>
        <dbReference type="EC" id="2.1.1.192"/>
    </reaction>
</comment>
<comment type="catalytic activity">
    <reaction evidence="1">
        <text>adenosine(37) in tRNA + 2 reduced [2Fe-2S]-[ferredoxin] + 2 S-adenosyl-L-methionine = 2-methyladenosine(37) in tRNA + 5'-deoxyadenosine + L-methionine + 2 oxidized [2Fe-2S]-[ferredoxin] + S-adenosyl-L-homocysteine</text>
        <dbReference type="Rhea" id="RHEA:43332"/>
        <dbReference type="Rhea" id="RHEA-COMP:10000"/>
        <dbReference type="Rhea" id="RHEA-COMP:10001"/>
        <dbReference type="Rhea" id="RHEA-COMP:10162"/>
        <dbReference type="Rhea" id="RHEA-COMP:10485"/>
        <dbReference type="ChEBI" id="CHEBI:17319"/>
        <dbReference type="ChEBI" id="CHEBI:33737"/>
        <dbReference type="ChEBI" id="CHEBI:33738"/>
        <dbReference type="ChEBI" id="CHEBI:57844"/>
        <dbReference type="ChEBI" id="CHEBI:57856"/>
        <dbReference type="ChEBI" id="CHEBI:59789"/>
        <dbReference type="ChEBI" id="CHEBI:74411"/>
        <dbReference type="ChEBI" id="CHEBI:74497"/>
        <dbReference type="EC" id="2.1.1.192"/>
    </reaction>
</comment>
<comment type="cofactor">
    <cofactor evidence="1">
        <name>[4Fe-4S] cluster</name>
        <dbReference type="ChEBI" id="CHEBI:49883"/>
    </cofactor>
    <text evidence="1">Binds 1 [4Fe-4S] cluster. The cluster is coordinated with 3 cysteines and an exchangeable S-adenosyl-L-methionine.</text>
</comment>
<comment type="subcellular location">
    <subcellularLocation>
        <location evidence="1">Cytoplasm</location>
    </subcellularLocation>
</comment>
<comment type="miscellaneous">
    <text evidence="1">Reaction proceeds by a ping-pong mechanism involving intermediate methylation of a conserved cysteine residue.</text>
</comment>
<comment type="similarity">
    <text evidence="1">Belongs to the radical SAM superfamily. RlmN family.</text>
</comment>
<gene>
    <name evidence="1" type="primary">rlmN</name>
    <name type="ordered locus">Pnap_1869</name>
</gene>
<keyword id="KW-0004">4Fe-4S</keyword>
<keyword id="KW-0963">Cytoplasm</keyword>
<keyword id="KW-1015">Disulfide bond</keyword>
<keyword id="KW-0408">Iron</keyword>
<keyword id="KW-0411">Iron-sulfur</keyword>
<keyword id="KW-0479">Metal-binding</keyword>
<keyword id="KW-0489">Methyltransferase</keyword>
<keyword id="KW-1185">Reference proteome</keyword>
<keyword id="KW-0698">rRNA processing</keyword>
<keyword id="KW-0949">S-adenosyl-L-methionine</keyword>
<keyword id="KW-0808">Transferase</keyword>
<keyword id="KW-0819">tRNA processing</keyword>
<reference key="1">
    <citation type="journal article" date="2009" name="Environ. Microbiol.">
        <title>The genome of Polaromonas naphthalenivorans strain CJ2, isolated from coal tar-contaminated sediment, reveals physiological and metabolic versatility and evolution through extensive horizontal gene transfer.</title>
        <authorList>
            <person name="Yagi J.M."/>
            <person name="Sims D."/>
            <person name="Brettin T."/>
            <person name="Bruce D."/>
            <person name="Madsen E.L."/>
        </authorList>
    </citation>
    <scope>NUCLEOTIDE SEQUENCE [LARGE SCALE GENOMIC DNA]</scope>
    <source>
        <strain>CJ2</strain>
    </source>
</reference>
<dbReference type="EC" id="2.1.1.192" evidence="1"/>
<dbReference type="EMBL" id="CP000529">
    <property type="protein sequence ID" value="ABM37179.1"/>
    <property type="molecule type" value="Genomic_DNA"/>
</dbReference>
<dbReference type="RefSeq" id="WP_011801260.1">
    <property type="nucleotide sequence ID" value="NC_008781.1"/>
</dbReference>
<dbReference type="SMR" id="A1VNF1"/>
<dbReference type="STRING" id="365044.Pnap_1869"/>
<dbReference type="KEGG" id="pna:Pnap_1869"/>
<dbReference type="eggNOG" id="COG0820">
    <property type="taxonomic scope" value="Bacteria"/>
</dbReference>
<dbReference type="HOGENOM" id="CLU_029101_0_0_4"/>
<dbReference type="OrthoDB" id="9793973at2"/>
<dbReference type="Proteomes" id="UP000000644">
    <property type="component" value="Chromosome"/>
</dbReference>
<dbReference type="GO" id="GO:0005737">
    <property type="term" value="C:cytoplasm"/>
    <property type="evidence" value="ECO:0007669"/>
    <property type="project" value="UniProtKB-SubCell"/>
</dbReference>
<dbReference type="GO" id="GO:0051539">
    <property type="term" value="F:4 iron, 4 sulfur cluster binding"/>
    <property type="evidence" value="ECO:0007669"/>
    <property type="project" value="UniProtKB-UniRule"/>
</dbReference>
<dbReference type="GO" id="GO:0046872">
    <property type="term" value="F:metal ion binding"/>
    <property type="evidence" value="ECO:0007669"/>
    <property type="project" value="UniProtKB-KW"/>
</dbReference>
<dbReference type="GO" id="GO:0070040">
    <property type="term" value="F:rRNA (adenine(2503)-C2-)-methyltransferase activity"/>
    <property type="evidence" value="ECO:0007669"/>
    <property type="project" value="UniProtKB-UniRule"/>
</dbReference>
<dbReference type="GO" id="GO:0019843">
    <property type="term" value="F:rRNA binding"/>
    <property type="evidence" value="ECO:0007669"/>
    <property type="project" value="UniProtKB-UniRule"/>
</dbReference>
<dbReference type="GO" id="GO:0002935">
    <property type="term" value="F:tRNA (adenine(37)-C2)-methyltransferase activity"/>
    <property type="evidence" value="ECO:0007669"/>
    <property type="project" value="UniProtKB-UniRule"/>
</dbReference>
<dbReference type="GO" id="GO:0000049">
    <property type="term" value="F:tRNA binding"/>
    <property type="evidence" value="ECO:0007669"/>
    <property type="project" value="UniProtKB-UniRule"/>
</dbReference>
<dbReference type="GO" id="GO:0070475">
    <property type="term" value="P:rRNA base methylation"/>
    <property type="evidence" value="ECO:0007669"/>
    <property type="project" value="UniProtKB-UniRule"/>
</dbReference>
<dbReference type="GO" id="GO:0030488">
    <property type="term" value="P:tRNA methylation"/>
    <property type="evidence" value="ECO:0007669"/>
    <property type="project" value="UniProtKB-UniRule"/>
</dbReference>
<dbReference type="CDD" id="cd01335">
    <property type="entry name" value="Radical_SAM"/>
    <property type="match status" value="1"/>
</dbReference>
<dbReference type="FunFam" id="1.10.150.530:FF:000003">
    <property type="entry name" value="Dual-specificity RNA methyltransferase RlmN"/>
    <property type="match status" value="1"/>
</dbReference>
<dbReference type="FunFam" id="3.20.20.70:FF:000008">
    <property type="entry name" value="Dual-specificity RNA methyltransferase RlmN"/>
    <property type="match status" value="1"/>
</dbReference>
<dbReference type="Gene3D" id="1.10.150.530">
    <property type="match status" value="1"/>
</dbReference>
<dbReference type="Gene3D" id="3.20.20.70">
    <property type="entry name" value="Aldolase class I"/>
    <property type="match status" value="1"/>
</dbReference>
<dbReference type="HAMAP" id="MF_01849">
    <property type="entry name" value="RNA_methyltr_RlmN"/>
    <property type="match status" value="1"/>
</dbReference>
<dbReference type="InterPro" id="IPR013785">
    <property type="entry name" value="Aldolase_TIM"/>
</dbReference>
<dbReference type="InterPro" id="IPR040072">
    <property type="entry name" value="Methyltransferase_A"/>
</dbReference>
<dbReference type="InterPro" id="IPR048641">
    <property type="entry name" value="RlmN_N"/>
</dbReference>
<dbReference type="InterPro" id="IPR027492">
    <property type="entry name" value="RNA_MTrfase_RlmN"/>
</dbReference>
<dbReference type="InterPro" id="IPR004383">
    <property type="entry name" value="rRNA_lsu_MTrfase_RlmN/Cfr"/>
</dbReference>
<dbReference type="InterPro" id="IPR007197">
    <property type="entry name" value="rSAM"/>
</dbReference>
<dbReference type="NCBIfam" id="TIGR00048">
    <property type="entry name" value="rRNA_mod_RlmN"/>
    <property type="match status" value="1"/>
</dbReference>
<dbReference type="PANTHER" id="PTHR30544">
    <property type="entry name" value="23S RRNA METHYLTRANSFERASE"/>
    <property type="match status" value="1"/>
</dbReference>
<dbReference type="PANTHER" id="PTHR30544:SF5">
    <property type="entry name" value="RADICAL SAM CORE DOMAIN-CONTAINING PROTEIN"/>
    <property type="match status" value="1"/>
</dbReference>
<dbReference type="Pfam" id="PF04055">
    <property type="entry name" value="Radical_SAM"/>
    <property type="match status" value="1"/>
</dbReference>
<dbReference type="Pfam" id="PF21016">
    <property type="entry name" value="RlmN_N"/>
    <property type="match status" value="1"/>
</dbReference>
<dbReference type="PIRSF" id="PIRSF006004">
    <property type="entry name" value="CHP00048"/>
    <property type="match status" value="1"/>
</dbReference>
<dbReference type="SFLD" id="SFLDF00275">
    <property type="entry name" value="adenosine_C2_methyltransferase"/>
    <property type="match status" value="1"/>
</dbReference>
<dbReference type="SFLD" id="SFLDS00029">
    <property type="entry name" value="Radical_SAM"/>
    <property type="match status" value="1"/>
</dbReference>
<dbReference type="SUPFAM" id="SSF102114">
    <property type="entry name" value="Radical SAM enzymes"/>
    <property type="match status" value="1"/>
</dbReference>
<dbReference type="PROSITE" id="PS51918">
    <property type="entry name" value="RADICAL_SAM"/>
    <property type="match status" value="1"/>
</dbReference>
<proteinExistence type="inferred from homology"/>
<feature type="chain" id="PRO_0000350308" description="Dual-specificity RNA methyltransferase RlmN">
    <location>
        <begin position="1"/>
        <end position="382"/>
    </location>
</feature>
<feature type="domain" description="Radical SAM core" evidence="2">
    <location>
        <begin position="97"/>
        <end position="339"/>
    </location>
</feature>
<feature type="active site" description="Proton acceptor" evidence="1">
    <location>
        <position position="91"/>
    </location>
</feature>
<feature type="active site" description="S-methylcysteine intermediate" evidence="1">
    <location>
        <position position="344"/>
    </location>
</feature>
<feature type="binding site" evidence="1">
    <location>
        <position position="111"/>
    </location>
    <ligand>
        <name>[4Fe-4S] cluster</name>
        <dbReference type="ChEBI" id="CHEBI:49883"/>
        <note>4Fe-4S-S-AdoMet</note>
    </ligand>
</feature>
<feature type="binding site" evidence="1">
    <location>
        <position position="115"/>
    </location>
    <ligand>
        <name>[4Fe-4S] cluster</name>
        <dbReference type="ChEBI" id="CHEBI:49883"/>
        <note>4Fe-4S-S-AdoMet</note>
    </ligand>
</feature>
<feature type="binding site" evidence="1">
    <location>
        <position position="118"/>
    </location>
    <ligand>
        <name>[4Fe-4S] cluster</name>
        <dbReference type="ChEBI" id="CHEBI:49883"/>
        <note>4Fe-4S-S-AdoMet</note>
    </ligand>
</feature>
<feature type="binding site" evidence="1">
    <location>
        <begin position="165"/>
        <end position="166"/>
    </location>
    <ligand>
        <name>S-adenosyl-L-methionine</name>
        <dbReference type="ChEBI" id="CHEBI:59789"/>
    </ligand>
</feature>
<feature type="binding site" evidence="1">
    <location>
        <position position="197"/>
    </location>
    <ligand>
        <name>S-adenosyl-L-methionine</name>
        <dbReference type="ChEBI" id="CHEBI:59789"/>
    </ligand>
</feature>
<feature type="binding site" evidence="1">
    <location>
        <begin position="219"/>
        <end position="221"/>
    </location>
    <ligand>
        <name>S-adenosyl-L-methionine</name>
        <dbReference type="ChEBI" id="CHEBI:59789"/>
    </ligand>
</feature>
<feature type="binding site" evidence="1">
    <location>
        <position position="301"/>
    </location>
    <ligand>
        <name>S-adenosyl-L-methionine</name>
        <dbReference type="ChEBI" id="CHEBI:59789"/>
    </ligand>
</feature>
<feature type="disulfide bond" description="(transient)" evidence="1">
    <location>
        <begin position="104"/>
        <end position="344"/>
    </location>
</feature>
<sequence length="382" mass="41956">MTTNLLDFDLEGLAAFCEQLGQKRFRATQLFRWIHQKGASDFEQMTDLAKSLREKLAVSAHIQGLNVVSRHESADGTIKWLFDVGAGDVIETVFIPETDRGTLCISSQAGCAVGCRFCSTGHQGFSRNLTTGEIISQLWFAEHFLRKHLGRNERVISNVVMMGMGEPLQNYSQLLPALKVMLNDHGYGLSRRRVTVSTSGVVPMIDRLAKDCPVALAVSLHAPQDALRSNLVPLNKKYPIAELLEACTRYQSAAPRDFITFEYCMLDGVNDQPEHARQLVALMKTHAANGLSCKFNLIPFNPFPASGLLRSDMPQVMAFAKILMDAGIITTVRKTRGDDIDAACGQLAGDVQDRTSVDQRMAAQRQGMLGGIKVVVVNGDTA</sequence>
<name>RLMN_POLNA</name>
<accession>A1VNF1</accession>
<evidence type="ECO:0000255" key="1">
    <source>
        <dbReference type="HAMAP-Rule" id="MF_01849"/>
    </source>
</evidence>
<evidence type="ECO:0000255" key="2">
    <source>
        <dbReference type="PROSITE-ProRule" id="PRU01266"/>
    </source>
</evidence>